<feature type="chain" id="PRO_0000138538" description="Peptide methionine sulfoxide reductase MsrA">
    <location>
        <begin position="1"/>
        <end position="162"/>
    </location>
</feature>
<feature type="active site" evidence="1">
    <location>
        <position position="10"/>
    </location>
</feature>
<dbReference type="EC" id="1.8.4.11" evidence="1"/>
<dbReference type="EMBL" id="AE001437">
    <property type="protein sequence ID" value="AAK78073.1"/>
    <property type="molecule type" value="Genomic_DNA"/>
</dbReference>
<dbReference type="PIR" id="F96910">
    <property type="entry name" value="F96910"/>
</dbReference>
<dbReference type="RefSeq" id="NP_346733.1">
    <property type="nucleotide sequence ID" value="NC_003030.1"/>
</dbReference>
<dbReference type="RefSeq" id="WP_010963415.1">
    <property type="nucleotide sequence ID" value="NC_003030.1"/>
</dbReference>
<dbReference type="SMR" id="Q97MV3"/>
<dbReference type="STRING" id="272562.CA_C0088"/>
<dbReference type="GeneID" id="44996570"/>
<dbReference type="KEGG" id="cac:CA_C0088"/>
<dbReference type="PATRIC" id="fig|272562.8.peg.271"/>
<dbReference type="eggNOG" id="COG0225">
    <property type="taxonomic scope" value="Bacteria"/>
</dbReference>
<dbReference type="HOGENOM" id="CLU_031040_10_2_9"/>
<dbReference type="OrthoDB" id="4174719at2"/>
<dbReference type="Proteomes" id="UP000000814">
    <property type="component" value="Chromosome"/>
</dbReference>
<dbReference type="GO" id="GO:0005737">
    <property type="term" value="C:cytoplasm"/>
    <property type="evidence" value="ECO:0007669"/>
    <property type="project" value="TreeGrafter"/>
</dbReference>
<dbReference type="GO" id="GO:0036456">
    <property type="term" value="F:L-methionine-(S)-S-oxide reductase activity"/>
    <property type="evidence" value="ECO:0007669"/>
    <property type="project" value="TreeGrafter"/>
</dbReference>
<dbReference type="GO" id="GO:0008113">
    <property type="term" value="F:peptide-methionine (S)-S-oxide reductase activity"/>
    <property type="evidence" value="ECO:0007669"/>
    <property type="project" value="UniProtKB-UniRule"/>
</dbReference>
<dbReference type="GO" id="GO:0034599">
    <property type="term" value="P:cellular response to oxidative stress"/>
    <property type="evidence" value="ECO:0007669"/>
    <property type="project" value="TreeGrafter"/>
</dbReference>
<dbReference type="GO" id="GO:0036211">
    <property type="term" value="P:protein modification process"/>
    <property type="evidence" value="ECO:0007669"/>
    <property type="project" value="UniProtKB-UniRule"/>
</dbReference>
<dbReference type="Gene3D" id="3.30.1060.10">
    <property type="entry name" value="Peptide methionine sulphoxide reductase MsrA"/>
    <property type="match status" value="1"/>
</dbReference>
<dbReference type="HAMAP" id="MF_01401">
    <property type="entry name" value="MsrA"/>
    <property type="match status" value="1"/>
</dbReference>
<dbReference type="InterPro" id="IPR002569">
    <property type="entry name" value="Met_Sox_Rdtase_MsrA_dom"/>
</dbReference>
<dbReference type="InterPro" id="IPR036509">
    <property type="entry name" value="Met_Sox_Rdtase_MsrA_sf"/>
</dbReference>
<dbReference type="InterPro" id="IPR050162">
    <property type="entry name" value="MsrA_MetSO_reductase"/>
</dbReference>
<dbReference type="NCBIfam" id="TIGR00401">
    <property type="entry name" value="msrA"/>
    <property type="match status" value="1"/>
</dbReference>
<dbReference type="PANTHER" id="PTHR42799">
    <property type="entry name" value="MITOCHONDRIAL PEPTIDE METHIONINE SULFOXIDE REDUCTASE"/>
    <property type="match status" value="1"/>
</dbReference>
<dbReference type="PANTHER" id="PTHR42799:SF2">
    <property type="entry name" value="MITOCHONDRIAL PEPTIDE METHIONINE SULFOXIDE REDUCTASE"/>
    <property type="match status" value="1"/>
</dbReference>
<dbReference type="Pfam" id="PF01625">
    <property type="entry name" value="PMSR"/>
    <property type="match status" value="1"/>
</dbReference>
<dbReference type="SUPFAM" id="SSF55068">
    <property type="entry name" value="Peptide methionine sulfoxide reductase"/>
    <property type="match status" value="1"/>
</dbReference>
<keyword id="KW-0560">Oxidoreductase</keyword>
<keyword id="KW-1185">Reference proteome</keyword>
<organism>
    <name type="scientific">Clostridium acetobutylicum (strain ATCC 824 / DSM 792 / JCM 1419 / IAM 19013 / LMG 5710 / NBRC 13948 / NRRL B-527 / VKM B-1787 / 2291 / W)</name>
    <dbReference type="NCBI Taxonomy" id="272562"/>
    <lineage>
        <taxon>Bacteria</taxon>
        <taxon>Bacillati</taxon>
        <taxon>Bacillota</taxon>
        <taxon>Clostridia</taxon>
        <taxon>Eubacteriales</taxon>
        <taxon>Clostridiaceae</taxon>
        <taxon>Clostridium</taxon>
    </lineage>
</organism>
<sequence>MKKIIFAGGCFWGVEAYFNTIDGVLNTKVGYANGNTEDPTYEDVCTDSTGYAEACYIEYDEKQLKLEKLIDAYWKVVDPTLKNRQGHDEGTQYRTGIYYVDEEDLKVILESKDKEQEKYDAPIVTEILPLKNFYDAEEYHQKYLDKNPNGYCHIPKELLKKH</sequence>
<proteinExistence type="inferred from homology"/>
<comment type="function">
    <text evidence="1">Has an important function as a repair enzyme for proteins that have been inactivated by oxidation. Catalyzes the reversible oxidation-reduction of methionine sulfoxide in proteins to methionine.</text>
</comment>
<comment type="catalytic activity">
    <reaction evidence="1">
        <text>L-methionyl-[protein] + [thioredoxin]-disulfide + H2O = L-methionyl-(S)-S-oxide-[protein] + [thioredoxin]-dithiol</text>
        <dbReference type="Rhea" id="RHEA:14217"/>
        <dbReference type="Rhea" id="RHEA-COMP:10698"/>
        <dbReference type="Rhea" id="RHEA-COMP:10700"/>
        <dbReference type="Rhea" id="RHEA-COMP:12313"/>
        <dbReference type="Rhea" id="RHEA-COMP:12315"/>
        <dbReference type="ChEBI" id="CHEBI:15377"/>
        <dbReference type="ChEBI" id="CHEBI:16044"/>
        <dbReference type="ChEBI" id="CHEBI:29950"/>
        <dbReference type="ChEBI" id="CHEBI:44120"/>
        <dbReference type="ChEBI" id="CHEBI:50058"/>
        <dbReference type="EC" id="1.8.4.11"/>
    </reaction>
</comment>
<comment type="catalytic activity">
    <reaction evidence="1">
        <text>[thioredoxin]-disulfide + L-methionine + H2O = L-methionine (S)-S-oxide + [thioredoxin]-dithiol</text>
        <dbReference type="Rhea" id="RHEA:19993"/>
        <dbReference type="Rhea" id="RHEA-COMP:10698"/>
        <dbReference type="Rhea" id="RHEA-COMP:10700"/>
        <dbReference type="ChEBI" id="CHEBI:15377"/>
        <dbReference type="ChEBI" id="CHEBI:29950"/>
        <dbReference type="ChEBI" id="CHEBI:50058"/>
        <dbReference type="ChEBI" id="CHEBI:57844"/>
        <dbReference type="ChEBI" id="CHEBI:58772"/>
        <dbReference type="EC" id="1.8.4.11"/>
    </reaction>
</comment>
<comment type="similarity">
    <text evidence="1">Belongs to the MsrA Met sulfoxide reductase family.</text>
</comment>
<reference key="1">
    <citation type="journal article" date="2001" name="J. Bacteriol.">
        <title>Genome sequence and comparative analysis of the solvent-producing bacterium Clostridium acetobutylicum.</title>
        <authorList>
            <person name="Noelling J."/>
            <person name="Breton G."/>
            <person name="Omelchenko M.V."/>
            <person name="Makarova K.S."/>
            <person name="Zeng Q."/>
            <person name="Gibson R."/>
            <person name="Lee H.M."/>
            <person name="Dubois J."/>
            <person name="Qiu D."/>
            <person name="Hitti J."/>
            <person name="Wolf Y.I."/>
            <person name="Tatusov R.L."/>
            <person name="Sabathe F."/>
            <person name="Doucette-Stamm L.A."/>
            <person name="Soucaille P."/>
            <person name="Daly M.J."/>
            <person name="Bennett G.N."/>
            <person name="Koonin E.V."/>
            <person name="Smith D.R."/>
        </authorList>
    </citation>
    <scope>NUCLEOTIDE SEQUENCE [LARGE SCALE GENOMIC DNA]</scope>
    <source>
        <strain>ATCC 824 / DSM 792 / JCM 1419 / IAM 19013 / LMG 5710 / NBRC 13948 / NRRL B-527 / VKM B-1787 / 2291 / W</strain>
    </source>
</reference>
<protein>
    <recommendedName>
        <fullName evidence="1">Peptide methionine sulfoxide reductase MsrA</fullName>
        <shortName evidence="1">Protein-methionine-S-oxide reductase</shortName>
        <ecNumber evidence="1">1.8.4.11</ecNumber>
    </recommendedName>
    <alternativeName>
        <fullName evidence="1">Peptide-methionine (S)-S-oxide reductase</fullName>
        <shortName evidence="1">Peptide Met(O) reductase</shortName>
    </alternativeName>
</protein>
<evidence type="ECO:0000255" key="1">
    <source>
        <dbReference type="HAMAP-Rule" id="MF_01401"/>
    </source>
</evidence>
<name>MSRA_CLOAB</name>
<gene>
    <name evidence="1" type="primary">msrA</name>
    <name type="ordered locus">CA_C0088</name>
</gene>
<accession>Q97MV3</accession>